<evidence type="ECO:0000255" key="1">
    <source>
        <dbReference type="HAMAP-Rule" id="MF_00262"/>
    </source>
</evidence>
<evidence type="ECO:0000256" key="2">
    <source>
        <dbReference type="SAM" id="MobiDB-lite"/>
    </source>
</evidence>
<keyword id="KW-0131">Cell cycle</keyword>
<keyword id="KW-0132">Cell division</keyword>
<keyword id="KW-1185">Reference proteome</keyword>
<comment type="function">
    <text evidence="1">Prevents the cell division inhibition by proteins MinC and MinD at internal division sites while permitting inhibition at polar sites. This ensures cell division at the proper site by restricting the formation of a division septum at the midpoint of the long axis of the cell.</text>
</comment>
<comment type="similarity">
    <text evidence="1">Belongs to the MinE family.</text>
</comment>
<reference key="1">
    <citation type="journal article" date="2003" name="Nature">
        <title>Genome divergence in two Prochlorococcus ecotypes reflects oceanic niche differentiation.</title>
        <authorList>
            <person name="Rocap G."/>
            <person name="Larimer F.W."/>
            <person name="Lamerdin J.E."/>
            <person name="Malfatti S."/>
            <person name="Chain P."/>
            <person name="Ahlgren N.A."/>
            <person name="Arellano A."/>
            <person name="Coleman M."/>
            <person name="Hauser L."/>
            <person name="Hess W.R."/>
            <person name="Johnson Z.I."/>
            <person name="Land M.L."/>
            <person name="Lindell D."/>
            <person name="Post A.F."/>
            <person name="Regala W."/>
            <person name="Shah M."/>
            <person name="Shaw S.L."/>
            <person name="Steglich C."/>
            <person name="Sullivan M.B."/>
            <person name="Ting C.S."/>
            <person name="Tolonen A."/>
            <person name="Webb E.A."/>
            <person name="Zinser E.R."/>
            <person name="Chisholm S.W."/>
        </authorList>
    </citation>
    <scope>NUCLEOTIDE SEQUENCE [LARGE SCALE GENOMIC DNA]</scope>
    <source>
        <strain>MIT 9313</strain>
    </source>
</reference>
<protein>
    <recommendedName>
        <fullName evidence="1">Cell division topological specificity factor</fullName>
    </recommendedName>
</protein>
<name>MINE_PROMM</name>
<organism>
    <name type="scientific">Prochlorococcus marinus (strain MIT 9313)</name>
    <dbReference type="NCBI Taxonomy" id="74547"/>
    <lineage>
        <taxon>Bacteria</taxon>
        <taxon>Bacillati</taxon>
        <taxon>Cyanobacteriota</taxon>
        <taxon>Cyanophyceae</taxon>
        <taxon>Synechococcales</taxon>
        <taxon>Prochlorococcaceae</taxon>
        <taxon>Prochlorococcus</taxon>
    </lineage>
</organism>
<proteinExistence type="inferred from homology"/>
<accession>Q7V5B5</accession>
<sequence length="118" mass="12984">MATTLRDILDKLLGRQPASAKTARERLQLVLAHDRSDLSPELLDQMRREIFEVVAKYVEIDLEEGEVSLETEDRMTALVANLPIKRSQAKAVSSQENGASSQEAVSSQESVSTPGAME</sequence>
<dbReference type="EMBL" id="BX548175">
    <property type="protein sequence ID" value="CAE21829.1"/>
    <property type="molecule type" value="Genomic_DNA"/>
</dbReference>
<dbReference type="RefSeq" id="WP_011131021.1">
    <property type="nucleotide sequence ID" value="NC_005071.1"/>
</dbReference>
<dbReference type="SMR" id="Q7V5B5"/>
<dbReference type="KEGG" id="pmt:PMT_1654"/>
<dbReference type="eggNOG" id="COG0851">
    <property type="taxonomic scope" value="Bacteria"/>
</dbReference>
<dbReference type="HOGENOM" id="CLU_137929_1_1_3"/>
<dbReference type="OrthoDB" id="9796578at2"/>
<dbReference type="Proteomes" id="UP000001423">
    <property type="component" value="Chromosome"/>
</dbReference>
<dbReference type="GO" id="GO:0051301">
    <property type="term" value="P:cell division"/>
    <property type="evidence" value="ECO:0007669"/>
    <property type="project" value="UniProtKB-KW"/>
</dbReference>
<dbReference type="GO" id="GO:0032955">
    <property type="term" value="P:regulation of division septum assembly"/>
    <property type="evidence" value="ECO:0007669"/>
    <property type="project" value="InterPro"/>
</dbReference>
<dbReference type="Gene3D" id="3.30.1070.10">
    <property type="entry name" value="Cell division topological specificity factor MinE"/>
    <property type="match status" value="1"/>
</dbReference>
<dbReference type="HAMAP" id="MF_00262">
    <property type="entry name" value="MinE"/>
    <property type="match status" value="1"/>
</dbReference>
<dbReference type="InterPro" id="IPR005527">
    <property type="entry name" value="MinE"/>
</dbReference>
<dbReference type="InterPro" id="IPR036707">
    <property type="entry name" value="MinE_sf"/>
</dbReference>
<dbReference type="NCBIfam" id="TIGR01215">
    <property type="entry name" value="minE"/>
    <property type="match status" value="1"/>
</dbReference>
<dbReference type="NCBIfam" id="NF001422">
    <property type="entry name" value="PRK00296.1"/>
    <property type="match status" value="1"/>
</dbReference>
<dbReference type="Pfam" id="PF03776">
    <property type="entry name" value="MinE"/>
    <property type="match status" value="1"/>
</dbReference>
<dbReference type="SUPFAM" id="SSF55229">
    <property type="entry name" value="Cell division protein MinE topological specificity domain"/>
    <property type="match status" value="1"/>
</dbReference>
<gene>
    <name evidence="1" type="primary">minE</name>
    <name type="ordered locus">PMT_1654</name>
</gene>
<feature type="chain" id="PRO_0000298152" description="Cell division topological specificity factor">
    <location>
        <begin position="1"/>
        <end position="118"/>
    </location>
</feature>
<feature type="region of interest" description="Disordered" evidence="2">
    <location>
        <begin position="86"/>
        <end position="118"/>
    </location>
</feature>
<feature type="compositionally biased region" description="Low complexity" evidence="2">
    <location>
        <begin position="99"/>
        <end position="112"/>
    </location>
</feature>